<name>L_PI3H4</name>
<organismHost>
    <name type="scientific">Homo sapiens</name>
    <name type="common">Human</name>
    <dbReference type="NCBI Taxonomy" id="9606"/>
</organismHost>
<reference key="1">
    <citation type="journal article" date="1988" name="Virology">
        <title>Molecular cloning and sequence analysis of the human parainfluenza 3 virus gene encoding the L protein.</title>
        <authorList>
            <person name="Galinski M.S."/>
            <person name="Mink M.A."/>
            <person name="Pons M.W."/>
        </authorList>
    </citation>
    <scope>NUCLEOTIDE SEQUENCE</scope>
</reference>
<reference key="2">
    <citation type="journal article" date="1987" name="Intervirology">
        <title>Nucleotide sequence of the coding and flanking regions of the human parainfluenza virus 3 hemagglutinin-neuraminidase gene: comparison with other paramyxoviruses.</title>
        <authorList>
            <person name="Storey D.G."/>
            <person name="Cote M.-J."/>
            <person name="Dimock K."/>
            <person name="Kang C.Y."/>
        </authorList>
    </citation>
    <scope>NUCLEOTIDE SEQUENCE [MRNA] OF 1-26</scope>
</reference>
<proteinExistence type="evidence at transcript level"/>
<sequence length="2233" mass="255806">MDTESNNGTVSDILYPECHLNSPIVKGKIAQLHTIMSLPQPYDMDDDSILVITRQKIKLNKLDKRQRSIRRLKLILTEKVNDLGKYTFIRYPEMSKEMFKLHIPGINSKVTELLLKADRTYSQMTDGLRDLWINVLSKLASKNDGSNYDLNEEINNISKVHTTYKSDKWYNPFKTWFTIKYDMRRLQKARNEVTFNMGKDYNLLEDQKNFLLIHPELVLILDKQNYNGYLITPELVLPYCDVVEGRWNISACAKLDPKLQSMYQKGNNLWEVIDKLFPIMGEKTFDVISLLEPLALSLIQTHDPVKQLRGAFLNHVLSEMELIFESRESIKEFLSVDYIDKILDIFNKSTIDEIAEIFSFFRTFGHPPLEASIAAEKVRKYMYIGKQLKFDTINKCHAIFCTIIINGYRERHGGQWPPVTLPDHAHEFIINAYGSNSAISYENAVDYYQSFIGIKFNKFIEPQLDEDLTIYMKDKALSPKKSNWDTVSPASNLLYRTNASNESRRLVEKFIADSKFDPNQILDYVESGDWLDDPEFNISYSLKEKEIKQEGRLFAKMTYKMRATQVLSETLLANNIGKFFQENGMVKGEIELLKRLTTISISGVPRYNEVYNNSKSHTDDLKTYNKISNLNLSSNQKSKKFEFKSTDIYNDGYETVSCFLTTDLKKYCLNWRYESTALFGETCNQIFGLNKLFNWLHPRLEGSTIYVGDPYCPPSDKEHISLEDHPDSGFYVHNPRGGIEGFCQKLWTLISISAIHLAAVRIGVRVTAMVQGDNQAIAVTTRVPNNYDYRVKKEIVYKDVVRFFDSLREVMDDLGHELKLNETIISSKMFIYSKRIYYDGRILPQALKALSRCVFWSETVIDETRSASSNLATSFAKAIENGYSPVLGYACSIFKNIQQLYIALGMNINPTITQNIKDLYFRNPNWMQYASLIPASVGGFNYMAMSRCFVRNIGDPSVAALADIKRFIKANLLDRSVLYRIMNQEPGESSFLDWASDPYSCNLPQSQNITTMIKNITARNVLQDSPNPLLSGLFTNTMIEEDEELAEFLMDRKVILPRVAHDILDNSLTGIRNAIAGMLDTTKSLIRVGINRGGLTYSLLRKISNYDLVQYETLSRTLRLIVSDKIRYEDMCSVDLAIALRQKMWIHLSGGRMISGLETPDPLELLSGVIITGSEHCKICYSSDGTNPYTWMYLPGNIKIGSAETGISSLRVPYFGSVTDERSEAQLGYIKNLSKPAKAAIRIAMIYTWAFGNDEISWMEASQIAQTRANFTLDSLKILTPVATSTNLSHRLKDTATQMKFSSTSLIRVSRFITMSNDNMSIKEANETKDTNLIYQQIMLTGLSVFEYLFRLEETTGHNPIVMHLHIEDECCIKESFNDEHINPESTLELIRYPESNEFIYDKDPLKDVDLSKLMVIKDHSYTIDMNYWDDTDIIHAISICTAITIADTMSQLDRDNLKEIIVIANDDDINSLITEFLTLDILVFLKTFGGLLVNQFAYTLYSLKTEGRDLIWDYIMRTLRDTSHSILKVLSNALSHPKVFKRFWDCGVLNPIYGPNTASQDQIKLALSICEYSLDLFMREWLNGVSLEIYICDSDMEVANDRKQAFISRHLSFVCCLAEIASFGPNLLNLTYLERLDLLKQYLELNIKDDPTLKYVQISGLLIKSFPSTVTYVRKTAIKYLRIRGISPPEVIDDWDPIEDENMLDNIVKTINDNCNKDNKGNKINNFWGLALKNYQVLKIRSITSDSDNNDRSDASTGGLTLPQGGNYLSHQLRLFGINSTSCLKALELSQILMKEVNKDQDRLFLGEGAGAMLACYDATLGPAVNYYNSGLNITDVIGQRELKIFPSEVSLVGKKLGNVTQILNRVKVLFNGNPNSTWIGNMECETLIWSELNDKSIGLVHCDMEGAIGKSEETVLHEHYSVIRITYLIGDDDVVLISKIIPTITPNWSRILYLYKLYWKDVSIISLKTSNPASTELYLISKDAYCTIMEPSEVVLSKLKRLSLLEENNLLKWIILSKKKNNEWLHHEIKEGERDYGVMRPYHMALQIFGFQINLNHLAKEFLSTPDLTNINNIIQSFQRTIKDVLFEWINITHDGKRHKLGGRYNIFPLKNKGKLRLLSRRLVLSWISLSLSTRLLTGRFPDEKFEHRAQTGYVSLPDTDLESLKLLSKNTIKNYRECIGSISYWFLTKEVKILMKLIGGAKLLGIPRQYKEPEEQLLEDYNQHDEFDID</sequence>
<keyword id="KW-0067">ATP-binding</keyword>
<keyword id="KW-1035">Host cytoplasm</keyword>
<keyword id="KW-0378">Hydrolase</keyword>
<keyword id="KW-0489">Methyltransferase</keyword>
<keyword id="KW-0506">mRNA capping</keyword>
<keyword id="KW-0507">mRNA processing</keyword>
<keyword id="KW-0511">Multifunctional enzyme</keyword>
<keyword id="KW-0547">Nucleotide-binding</keyword>
<keyword id="KW-0548">Nucleotidyltransferase</keyword>
<keyword id="KW-0696">RNA-directed RNA polymerase</keyword>
<keyword id="KW-0949">S-adenosyl-L-methionine</keyword>
<keyword id="KW-0808">Transferase</keyword>
<keyword id="KW-0693">Viral RNA replication</keyword>
<keyword id="KW-0946">Virion</keyword>
<accession>P12577</accession>
<evidence type="ECO:0000250" key="1"/>
<evidence type="ECO:0000250" key="2">
    <source>
        <dbReference type="UniProtKB" id="P03523"/>
    </source>
</evidence>
<evidence type="ECO:0000250" key="3">
    <source>
        <dbReference type="UniProtKB" id="P28887"/>
    </source>
</evidence>
<evidence type="ECO:0000255" key="4"/>
<evidence type="ECO:0000255" key="5">
    <source>
        <dbReference type="PROSITE-ProRule" id="PRU00539"/>
    </source>
</evidence>
<evidence type="ECO:0000255" key="6">
    <source>
        <dbReference type="PROSITE-ProRule" id="PRU00923"/>
    </source>
</evidence>
<evidence type="ECO:0000305" key="7"/>
<gene>
    <name type="primary">L</name>
</gene>
<dbReference type="EC" id="2.7.7.48" evidence="3"/>
<dbReference type="EC" id="3.6.1.-" evidence="2"/>
<dbReference type="EC" id="2.7.7.88" evidence="2"/>
<dbReference type="EC" id="2.1.1.375" evidence="2"/>
<dbReference type="EMBL" id="M21649">
    <property type="protein sequence ID" value="AAA46854.1"/>
    <property type="molecule type" value="Genomic_RNA"/>
</dbReference>
<dbReference type="EMBL" id="M20402">
    <property type="protein sequence ID" value="AAA46857.1"/>
    <property type="molecule type" value="mRNA"/>
</dbReference>
<dbReference type="PIR" id="B46451">
    <property type="entry name" value="B46451"/>
</dbReference>
<dbReference type="SMR" id="P12577"/>
<dbReference type="GO" id="GO:0030430">
    <property type="term" value="C:host cell cytoplasm"/>
    <property type="evidence" value="ECO:0007669"/>
    <property type="project" value="UniProtKB-SubCell"/>
</dbReference>
<dbReference type="GO" id="GO:0044423">
    <property type="term" value="C:virion component"/>
    <property type="evidence" value="ECO:0007669"/>
    <property type="project" value="UniProtKB-KW"/>
</dbReference>
<dbReference type="GO" id="GO:0005524">
    <property type="term" value="F:ATP binding"/>
    <property type="evidence" value="ECO:0007669"/>
    <property type="project" value="UniProtKB-KW"/>
</dbReference>
<dbReference type="GO" id="GO:0003924">
    <property type="term" value="F:GTPase activity"/>
    <property type="evidence" value="ECO:0007669"/>
    <property type="project" value="RHEA"/>
</dbReference>
<dbReference type="GO" id="GO:0004482">
    <property type="term" value="F:mRNA 5'-cap (guanine-N7-)-methyltransferase activity"/>
    <property type="evidence" value="ECO:0007669"/>
    <property type="project" value="InterPro"/>
</dbReference>
<dbReference type="GO" id="GO:0003968">
    <property type="term" value="F:RNA-directed RNA polymerase activity"/>
    <property type="evidence" value="ECO:0007669"/>
    <property type="project" value="UniProtKB-KW"/>
</dbReference>
<dbReference type="InterPro" id="IPR039736">
    <property type="entry name" value="L_poly_C"/>
</dbReference>
<dbReference type="InterPro" id="IPR026890">
    <property type="entry name" value="Mononeg_mRNAcap"/>
</dbReference>
<dbReference type="InterPro" id="IPR014023">
    <property type="entry name" value="Mononeg_RNA_pol_cat"/>
</dbReference>
<dbReference type="InterPro" id="IPR025786">
    <property type="entry name" value="Mononega_L_MeTrfase"/>
</dbReference>
<dbReference type="InterPro" id="IPR016269">
    <property type="entry name" value="RNA-dir_pol_paramyxovirus"/>
</dbReference>
<dbReference type="NCBIfam" id="TIGR04198">
    <property type="entry name" value="paramyx_RNAcap"/>
    <property type="match status" value="1"/>
</dbReference>
<dbReference type="Pfam" id="PF14318">
    <property type="entry name" value="Mononeg_mRNAcap"/>
    <property type="match status" value="1"/>
</dbReference>
<dbReference type="Pfam" id="PF00946">
    <property type="entry name" value="Mononeg_RNA_pol"/>
    <property type="match status" value="1"/>
</dbReference>
<dbReference type="PIRSF" id="PIRSF000830">
    <property type="entry name" value="RNA_pol_ParamyxoV"/>
    <property type="match status" value="1"/>
</dbReference>
<dbReference type="PROSITE" id="PS50526">
    <property type="entry name" value="RDRP_SSRNA_NEG_NONSEG"/>
    <property type="match status" value="1"/>
</dbReference>
<dbReference type="PROSITE" id="PS51590">
    <property type="entry name" value="SAM_MT_MNV_L"/>
    <property type="match status" value="1"/>
</dbReference>
<protein>
    <recommendedName>
        <fullName>RNA-directed RNA polymerase L</fullName>
        <shortName>Protein L</shortName>
    </recommendedName>
    <alternativeName>
        <fullName>Large structural protein</fullName>
    </alternativeName>
    <alternativeName>
        <fullName>Replicase</fullName>
    </alternativeName>
    <alternativeName>
        <fullName>Transcriptase</fullName>
    </alternativeName>
    <domain>
        <recommendedName>
            <fullName>RNA-directed RNA polymerase</fullName>
            <ecNumber evidence="3">2.7.7.48</ecNumber>
        </recommendedName>
    </domain>
    <domain>
        <recommendedName>
            <fullName evidence="2">GTP phosphohydrolase</fullName>
            <ecNumber evidence="2">3.6.1.-</ecNumber>
        </recommendedName>
    </domain>
    <domain>
        <recommendedName>
            <fullName evidence="7">GDP polyribonucleotidyltransferase</fullName>
            <ecNumber evidence="2">2.7.7.88</ecNumber>
        </recommendedName>
        <alternativeName>
            <fullName evidence="7">PRNTase</fullName>
        </alternativeName>
    </domain>
    <domain>
        <recommendedName>
            <fullName evidence="7">mRNA cap methyltransferase</fullName>
            <ecNumber evidence="2">2.1.1.375</ecNumber>
        </recommendedName>
        <alternativeName>
            <fullName evidence="2">mRNA (guanine-N(7)-)-methyltransferase</fullName>
            <shortName evidence="2">G-N7-MTase</shortName>
        </alternativeName>
        <alternativeName>
            <fullName evidence="2">mRNA (nucleoside-2'-O-)-methyltransferase</fullName>
            <shortName evidence="2">N1-2'-O-MTase</shortName>
        </alternativeName>
    </domain>
</protein>
<comment type="function">
    <text evidence="2">RNA-directed RNA polymerase that catalyzes the transcription of viral mRNAs, their capping and polyadenylation. The template is composed of the viral RNA tightly encapsidated by the nucleoprotein (N). The viral polymerase binds to the genomic RNA at the 3' leader promoter, and transcribes subsequently all viral mRNAs with a decreasing efficiency. The first gene is the most transcribed, and the last the least transcribed. The viral phosphoprotein acts as a processivity factor. Capping is concomitant with initiation of mRNA transcription. Indeed, a GDP polyribonucleotidyl transferase (PRNTase) adds the cap structure when the nascent RNA chain length has reached few nucleotides. Ribose 2'-O methylation of viral mRNA cap precedes and facilitates subsequent guanine-N-7 methylation, both activities being carried by the viral polymerase. Polyadenylation of mRNAs occur by a stuttering mechanism at a slipery stop site present at the end viral genes. After finishing transcription of a mRNA, the polymerase can resume transcription of the downstream gene.</text>
</comment>
<comment type="function">
    <text evidence="2">RNA-directed RNA polymerase that catalyzes the replication of viral genomic RNA. The template is composed of the viral RNA tightly encapsidated by the nucleoprotein (N). The replicase mode is dependent on intracellular N protein concentration. In this mode, the polymerase replicates the whole viral genome without recognizing transcriptional signals, and the replicated genome is not caped or polyadenylated.</text>
</comment>
<comment type="catalytic activity">
    <reaction evidence="5">
        <text>RNA(n) + a ribonucleoside 5'-triphosphate = RNA(n+1) + diphosphate</text>
        <dbReference type="Rhea" id="RHEA:21248"/>
        <dbReference type="Rhea" id="RHEA-COMP:14527"/>
        <dbReference type="Rhea" id="RHEA-COMP:17342"/>
        <dbReference type="ChEBI" id="CHEBI:33019"/>
        <dbReference type="ChEBI" id="CHEBI:61557"/>
        <dbReference type="ChEBI" id="CHEBI:140395"/>
        <dbReference type="EC" id="2.7.7.48"/>
    </reaction>
</comment>
<comment type="catalytic activity">
    <reaction evidence="2">
        <text>a 5'-end (5'-triphosphoguanosine)-adenylyl-adenylyl-cytidylyl-adenosine in mRNA + 2 S-adenosyl-L-methionine = a 5'-end (N(7)-methyl 5'-triphosphoguanosine)-(2'-O-methyladenylyl)-adenylyl-cytidylyl-adenosine in mRNA + 2 S-adenosyl-L-homocysteine + H(+)</text>
        <dbReference type="Rhea" id="RHEA:65376"/>
        <dbReference type="Rhea" id="RHEA-COMP:16797"/>
        <dbReference type="Rhea" id="RHEA-COMP:16798"/>
        <dbReference type="ChEBI" id="CHEBI:15378"/>
        <dbReference type="ChEBI" id="CHEBI:57856"/>
        <dbReference type="ChEBI" id="CHEBI:59789"/>
        <dbReference type="ChEBI" id="CHEBI:156483"/>
        <dbReference type="ChEBI" id="CHEBI:156484"/>
        <dbReference type="EC" id="2.1.1.375"/>
    </reaction>
</comment>
<comment type="catalytic activity">
    <reaction evidence="2">
        <text>a 5'-end (5'-triphosphoguanosine)-adenylyl-adenylyl-cytidylyl-adenosine in mRNA + S-adenosyl-L-methionine = a 5'-end (5'-triphosphoguanosine)-(2'-O-methyladenylyl)-adenylyl-cytidylyl-adenosine in mRNA + S-adenosyl-L-homocysteine + H(+)</text>
        <dbReference type="Rhea" id="RHEA:65380"/>
        <dbReference type="Rhea" id="RHEA-COMP:16797"/>
        <dbReference type="Rhea" id="RHEA-COMP:16801"/>
        <dbReference type="ChEBI" id="CHEBI:15378"/>
        <dbReference type="ChEBI" id="CHEBI:57856"/>
        <dbReference type="ChEBI" id="CHEBI:59789"/>
        <dbReference type="ChEBI" id="CHEBI:156482"/>
        <dbReference type="ChEBI" id="CHEBI:156484"/>
    </reaction>
</comment>
<comment type="catalytic activity">
    <reaction evidence="3">
        <text>a 5'-end triphospho-adenylyl-adenylyl-cytidylyl-adenosine in mRNA + GDP + H(+) = a 5'-end (5'-triphosphoguanosine)-adenylyl-adenylyl-cytidylyl-adenosine in mRNA + diphosphate</text>
        <dbReference type="Rhea" id="RHEA:65436"/>
        <dbReference type="Rhea" id="RHEA-COMP:16797"/>
        <dbReference type="Rhea" id="RHEA-COMP:16799"/>
        <dbReference type="ChEBI" id="CHEBI:15378"/>
        <dbReference type="ChEBI" id="CHEBI:33019"/>
        <dbReference type="ChEBI" id="CHEBI:58189"/>
        <dbReference type="ChEBI" id="CHEBI:156484"/>
        <dbReference type="ChEBI" id="CHEBI:156503"/>
        <dbReference type="EC" id="2.7.7.88"/>
    </reaction>
</comment>
<comment type="catalytic activity">
    <reaction evidence="2">
        <text>a 5'-end (5'-triphosphoguanosine)-(2'-O-methyladenylyl)-adenylyl-cytidylyl-adenosine in mRNA + S-adenosyl-L-methionine = a 5'-end (N(7)-methyl 5'-triphosphoguanosine)-(2'-O-methyladenylyl)-adenylyl-cytidylyl-adenosine in mRNA + S-adenosyl-L-homocysteine</text>
        <dbReference type="Rhea" id="RHEA:65440"/>
        <dbReference type="Rhea" id="RHEA-COMP:16798"/>
        <dbReference type="Rhea" id="RHEA-COMP:16801"/>
        <dbReference type="ChEBI" id="CHEBI:57856"/>
        <dbReference type="ChEBI" id="CHEBI:59789"/>
        <dbReference type="ChEBI" id="CHEBI:156482"/>
        <dbReference type="ChEBI" id="CHEBI:156483"/>
    </reaction>
</comment>
<comment type="catalytic activity">
    <reaction evidence="3">
        <text>GTP + H2O = GDP + phosphate + H(+)</text>
        <dbReference type="Rhea" id="RHEA:19669"/>
        <dbReference type="ChEBI" id="CHEBI:15377"/>
        <dbReference type="ChEBI" id="CHEBI:15378"/>
        <dbReference type="ChEBI" id="CHEBI:37565"/>
        <dbReference type="ChEBI" id="CHEBI:43474"/>
        <dbReference type="ChEBI" id="CHEBI:58189"/>
    </reaction>
</comment>
<comment type="subunit">
    <text evidence="1">Interacts with the P protein.</text>
</comment>
<comment type="subcellular location">
    <subcellularLocation>
        <location evidence="7">Virion</location>
    </subcellularLocation>
    <subcellularLocation>
        <location evidence="1">Host cytoplasm</location>
    </subcellularLocation>
</comment>
<comment type="similarity">
    <text evidence="7">Belongs to the paramyxovirus L protein family.</text>
</comment>
<feature type="chain" id="PRO_0000142733" description="RNA-directed RNA polymerase L">
    <location>
        <begin position="1"/>
        <end position="2233"/>
    </location>
</feature>
<feature type="domain" description="RdRp catalytic" evidence="5">
    <location>
        <begin position="656"/>
        <end position="840"/>
    </location>
</feature>
<feature type="domain" description="Mononegavirus-type SAM-dependent 2'-O-MTase" evidence="6">
    <location>
        <begin position="1775"/>
        <end position="1982"/>
    </location>
</feature>
<feature type="binding site" evidence="4">
    <location>
        <begin position="1805"/>
        <end position="1814"/>
    </location>
    <ligand>
        <name>ATP</name>
        <dbReference type="ChEBI" id="CHEBI:30616"/>
    </ligand>
</feature>
<feature type="sequence conflict" description="In Ref. 2; AAA46857." evidence="7" ref="2">
    <original>K</original>
    <variation>R</variation>
    <location>
        <position position="26"/>
    </location>
</feature>
<organism>
    <name type="scientific">Human parainfluenza 3 virus (strain Wash/47885/57)</name>
    <name type="common">HPIV-3</name>
    <name type="synonym">Human parainfluenza 3 virus (strain NIH 47885)</name>
    <dbReference type="NCBI Taxonomy" id="11217"/>
    <lineage>
        <taxon>Viruses</taxon>
        <taxon>Riboviria</taxon>
        <taxon>Orthornavirae</taxon>
        <taxon>Negarnaviricota</taxon>
        <taxon>Haploviricotina</taxon>
        <taxon>Monjiviricetes</taxon>
        <taxon>Mononegavirales</taxon>
        <taxon>Paramyxoviridae</taxon>
        <taxon>Feraresvirinae</taxon>
        <taxon>Respirovirus</taxon>
        <taxon>Respirovirus pneumoniae</taxon>
    </lineage>
</organism>